<gene>
    <name evidence="8" type="primary">Adgrg2</name>
    <name type="synonym">Gpr64</name>
    <name evidence="6" type="synonym">Re6</name>
</gene>
<comment type="function">
    <text evidence="1">Adhesion G-protein coupled receptor (aGPCR) for steroid hormones, such as dehydroepiandrosterone (DHEA; also named 3beta-hydroxyandrost-5-en-17-one) and androstenedione. Involved in a signal transduction pathway controlling epididymal function and male fertility. Ligand binding causes a conformation change that triggers signaling via guanine nucleotide-binding proteins (G proteins) and modulates the activity of downstream effectors, such as adenylate cyclase. ADGRG2 is coupled to G(s) G proteins and mediates activation of adenylate cyclase activity. Also able to couple with G(q) G proteins in vitro. May regulate fluid exchange within epididymis.</text>
</comment>
<comment type="activity regulation">
    <text evidence="1 4">Forms a heterodimer of 2 chains generated by proteolytic processing that remain associated through non-covalent interactions mediated by the GAIN-B domain (By similarity). In the inactivated receptor, the Stachel sequence (also named stalk) is embedded in the GAIN-B domain, where it adopts a beta-strand conformation. On activation, the Stachel moves into the 7 transmembrane region and adopts a twisted hook-shaped configuration that forms contacts within the receptor, leading to coupling of a G-alpha protein, which activates signaling. The cleaved GAIN-B and N-terminal domains can then dissociate from the rest of the receptor. Deoxycorticosterone (DOC) acts as an antagonist of ADGRG2 (By similarity).</text>
</comment>
<comment type="subunit">
    <text evidence="2 4">Heterodimer of 2 chains generated by proteolytic processing; the large extracellular N-terminal fragment and the membrane-bound C-terminal fragment predominantly remain associated and non-covalently linked (By similarity). Interacts with CFTR (By similarity).</text>
</comment>
<comment type="subcellular location">
    <subcellularLocation>
        <location evidence="5">Apical cell membrane</location>
        <topology evidence="3">Multi-pass membrane protein</topology>
    </subcellularLocation>
</comment>
<comment type="alternative products">
    <event type="alternative splicing"/>
    <isoform>
        <id>Q8CJ11-1</id>
        <name>1</name>
        <name>Long</name>
        <sequence type="displayed"/>
    </isoform>
    <isoform>
        <id>Q8CJ11-2</id>
        <name>2</name>
        <name>d2</name>
        <sequence type="described" ref="VSP_009810"/>
    </isoform>
    <isoform>
        <id>Q8CJ11-3</id>
        <name>3</name>
        <name>d1</name>
        <sequence type="described" ref="VSP_009811"/>
    </isoform>
</comment>
<comment type="tissue specificity">
    <text evidence="5">Epididymis-specific expression (at protein level). Associated with apical membranes of efferent ductule and proximal epididymal duct epithelia (PubMed:12420295).</text>
</comment>
<comment type="domain">
    <text evidence="1">The Stachel sequence (also named stalk) in the C-terminal part of the extracellular domain (ECD) functions as a tethered agonist. In the inactivated receptor, the Stachel sequence (also named stalk) is embedded in the GAIN-B domain, where it adopts a beta-strand conformation. On activation, the Stachel moves into the 7 transmembrane region and adopts a twisted hook-shaped configuration that forms contacts within the receptor, leading to coupling of a G-alpha protein, which activates signaling.</text>
</comment>
<comment type="PTM">
    <text evidence="4">Proteolytically cleaved into 2 subunits, an extracellular subunit and a seven-transmembrane subunit.</text>
</comment>
<comment type="PTM">
    <text evidence="5">Highly glycosylated.</text>
</comment>
<comment type="similarity">
    <text evidence="7">Belongs to the G-protein coupled receptor 2 family. Adhesion G-protein coupled receptor (ADGR) subfamily.</text>
</comment>
<accession>Q8CJ11</accession>
<accession>Q8CJ06</accession>
<accession>Q8CJ07</accession>
<protein>
    <recommendedName>
        <fullName>Adhesion G-protein coupled receptor G2</fullName>
    </recommendedName>
    <alternativeName>
        <fullName>G-protein coupled receptor 64</fullName>
    </alternativeName>
    <alternativeName>
        <fullName evidence="6">Rat epididymis-specific protein 6</fullName>
        <shortName evidence="6">Re6</shortName>
    </alternativeName>
    <component>
        <recommendedName>
            <fullName evidence="7">Adhesion G-protein coupled receptor G2, N-terminal fragment</fullName>
            <shortName evidence="7">ADGRG2 N-terminal fragment</shortName>
        </recommendedName>
    </component>
    <component>
        <recommendedName>
            <fullName evidence="7">Adhesion G-protein coupled receptor G2, C-terminal fragment</fullName>
            <shortName evidence="7">ADGRG2 C-terminal fragment</shortName>
        </recommendedName>
    </component>
</protein>
<reference key="1">
    <citation type="journal article" date="2003" name="Mol. Reprod. Dev.">
        <title>HE6, a two-subunit heptahelical receptor associated with apical membranes of efferent and epididymal duct epithelia.</title>
        <authorList>
            <person name="Obermann H."/>
            <person name="Samalecos A."/>
            <person name="Osterhoff C."/>
            <person name="Schroeder B."/>
            <person name="Heller R."/>
            <person name="Kirchhoff C."/>
        </authorList>
    </citation>
    <scope>NUCLEOTIDE SEQUENCE [MRNA] (ISOFORMS 1; 2 AND 3)</scope>
    <scope>GLYCOSYLATION</scope>
    <scope>SUBCELLULAR LOCATION</scope>
    <scope>TISSUE SPECIFICITY</scope>
    <source>
        <strain>Lewis</strain>
        <tissue>Epididymis</tissue>
    </source>
</reference>
<proteinExistence type="evidence at protein level"/>
<dbReference type="EMBL" id="AF538953">
    <property type="protein sequence ID" value="AAN33055.1"/>
    <property type="molecule type" value="mRNA"/>
</dbReference>
<dbReference type="EMBL" id="AF538958">
    <property type="protein sequence ID" value="AAN33060.1"/>
    <property type="molecule type" value="mRNA"/>
</dbReference>
<dbReference type="EMBL" id="AF538959">
    <property type="protein sequence ID" value="AAN33061.1"/>
    <property type="molecule type" value="mRNA"/>
</dbReference>
<dbReference type="RefSeq" id="NP_001257800.1">
    <molecule id="Q8CJ11-3"/>
    <property type="nucleotide sequence ID" value="NM_001270871.1"/>
</dbReference>
<dbReference type="RefSeq" id="NP_001257801.1">
    <molecule id="Q8CJ11-2"/>
    <property type="nucleotide sequence ID" value="NM_001270872.1"/>
</dbReference>
<dbReference type="RefSeq" id="NP_852031.1">
    <molecule id="Q8CJ11-1"/>
    <property type="nucleotide sequence ID" value="NM_181366.2"/>
</dbReference>
<dbReference type="RefSeq" id="XP_017457416.1">
    <property type="nucleotide sequence ID" value="XM_017601927.1"/>
</dbReference>
<dbReference type="RefSeq" id="XP_038955442.1">
    <molecule id="Q8CJ11-3"/>
    <property type="nucleotide sequence ID" value="XM_039099514.2"/>
</dbReference>
<dbReference type="RefSeq" id="XP_063135897.1">
    <molecule id="Q8CJ11-3"/>
    <property type="nucleotide sequence ID" value="XM_063279827.1"/>
</dbReference>
<dbReference type="RefSeq" id="XP_063135898.1">
    <molecule id="Q8CJ11-2"/>
    <property type="nucleotide sequence ID" value="XM_063279828.1"/>
</dbReference>
<dbReference type="SMR" id="Q8CJ11"/>
<dbReference type="FunCoup" id="Q8CJ11">
    <property type="interactions" value="73"/>
</dbReference>
<dbReference type="STRING" id="10116.ENSRNOP00000039239"/>
<dbReference type="MEROPS" id="P02.007"/>
<dbReference type="GlyCosmos" id="Q8CJ11">
    <property type="glycosylation" value="20 sites, No reported glycans"/>
</dbReference>
<dbReference type="GlyGen" id="Q8CJ11">
    <property type="glycosylation" value="21 sites"/>
</dbReference>
<dbReference type="PhosphoSitePlus" id="Q8CJ11"/>
<dbReference type="PaxDb" id="10116-ENSRNOP00000039239"/>
<dbReference type="Ensembl" id="ENSRNOT00000040770.6">
    <molecule id="Q8CJ11-1"/>
    <property type="protein sequence ID" value="ENSRNOP00000039239.3"/>
    <property type="gene ID" value="ENSRNOG00000032472.7"/>
</dbReference>
<dbReference type="GeneID" id="266735"/>
<dbReference type="KEGG" id="rno:266735"/>
<dbReference type="AGR" id="RGD:628618"/>
<dbReference type="CTD" id="10149"/>
<dbReference type="RGD" id="628618">
    <property type="gene designation" value="Adgrg2"/>
</dbReference>
<dbReference type="eggNOG" id="KOG4193">
    <property type="taxonomic scope" value="Eukaryota"/>
</dbReference>
<dbReference type="GeneTree" id="ENSGT00940000156341"/>
<dbReference type="HOGENOM" id="CLU_002753_3_3_1"/>
<dbReference type="InParanoid" id="Q8CJ11"/>
<dbReference type="OMA" id="RIWLFGN"/>
<dbReference type="OrthoDB" id="72565at9989"/>
<dbReference type="PhylomeDB" id="Q8CJ11"/>
<dbReference type="TreeFam" id="TF321769"/>
<dbReference type="PRO" id="PR:Q8CJ11"/>
<dbReference type="Proteomes" id="UP000002494">
    <property type="component" value="Chromosome X"/>
</dbReference>
<dbReference type="Bgee" id="ENSRNOG00000032472">
    <property type="expression patterns" value="Expressed in stomach and 11 other cell types or tissues"/>
</dbReference>
<dbReference type="GO" id="GO:0016324">
    <property type="term" value="C:apical plasma membrane"/>
    <property type="evidence" value="ECO:0000314"/>
    <property type="project" value="RGD"/>
</dbReference>
<dbReference type="GO" id="GO:0005886">
    <property type="term" value="C:plasma membrane"/>
    <property type="evidence" value="ECO:0000318"/>
    <property type="project" value="GO_Central"/>
</dbReference>
<dbReference type="GO" id="GO:0004930">
    <property type="term" value="F:G protein-coupled receptor activity"/>
    <property type="evidence" value="ECO:0000250"/>
    <property type="project" value="UniProtKB"/>
</dbReference>
<dbReference type="GO" id="GO:0007189">
    <property type="term" value="P:adenylate cyclase-activating G protein-coupled receptor signaling pathway"/>
    <property type="evidence" value="ECO:0000250"/>
    <property type="project" value="UniProtKB"/>
</dbReference>
<dbReference type="GO" id="GO:0007166">
    <property type="term" value="P:cell surface receptor signaling pathway"/>
    <property type="evidence" value="ECO:0007669"/>
    <property type="project" value="InterPro"/>
</dbReference>
<dbReference type="GO" id="GO:0007286">
    <property type="term" value="P:spermatid development"/>
    <property type="evidence" value="ECO:0000250"/>
    <property type="project" value="UniProtKB"/>
</dbReference>
<dbReference type="CDD" id="cd15444">
    <property type="entry name" value="7tmB2_GPR64"/>
    <property type="match status" value="1"/>
</dbReference>
<dbReference type="FunFam" id="1.20.1070.10:FF:000043">
    <property type="entry name" value="adhesion G-protein coupled receptor G2 isoform X1"/>
    <property type="match status" value="1"/>
</dbReference>
<dbReference type="FunFam" id="2.60.220.50:FF:000003">
    <property type="entry name" value="adhesion G-protein coupled receptor G2 isoform X2"/>
    <property type="match status" value="1"/>
</dbReference>
<dbReference type="Gene3D" id="2.60.220.50">
    <property type="match status" value="1"/>
</dbReference>
<dbReference type="Gene3D" id="1.20.1070.10">
    <property type="entry name" value="Rhodopsin 7-helix transmembrane proteins"/>
    <property type="match status" value="1"/>
</dbReference>
<dbReference type="InterPro" id="IPR057244">
    <property type="entry name" value="GAIN_B"/>
</dbReference>
<dbReference type="InterPro" id="IPR046338">
    <property type="entry name" value="GAIN_dom_sf"/>
</dbReference>
<dbReference type="InterPro" id="IPR017981">
    <property type="entry name" value="GPCR_2-like_7TM"/>
</dbReference>
<dbReference type="InterPro" id="IPR000832">
    <property type="entry name" value="GPCR_2_secretin-like"/>
</dbReference>
<dbReference type="InterPro" id="IPR017983">
    <property type="entry name" value="GPCR_2_secretin-like_CS"/>
</dbReference>
<dbReference type="InterPro" id="IPR000203">
    <property type="entry name" value="GPS"/>
</dbReference>
<dbReference type="PANTHER" id="PTHR12011">
    <property type="entry name" value="ADHESION G-PROTEIN COUPLED RECEPTOR"/>
    <property type="match status" value="1"/>
</dbReference>
<dbReference type="PANTHER" id="PTHR12011:SF264">
    <property type="entry name" value="ADHESION G-PROTEIN COUPLED RECEPTOR G2"/>
    <property type="match status" value="1"/>
</dbReference>
<dbReference type="Pfam" id="PF00002">
    <property type="entry name" value="7tm_2"/>
    <property type="match status" value="1"/>
</dbReference>
<dbReference type="Pfam" id="PF01825">
    <property type="entry name" value="GPS"/>
    <property type="match status" value="1"/>
</dbReference>
<dbReference type="PRINTS" id="PR00249">
    <property type="entry name" value="GPCRSECRETIN"/>
</dbReference>
<dbReference type="SMART" id="SM00303">
    <property type="entry name" value="GPS"/>
    <property type="match status" value="1"/>
</dbReference>
<dbReference type="SUPFAM" id="SSF81321">
    <property type="entry name" value="Family A G protein-coupled receptor-like"/>
    <property type="match status" value="1"/>
</dbReference>
<dbReference type="PROSITE" id="PS00650">
    <property type="entry name" value="G_PROTEIN_RECEP_F2_2"/>
    <property type="match status" value="1"/>
</dbReference>
<dbReference type="PROSITE" id="PS50261">
    <property type="entry name" value="G_PROTEIN_RECEP_F2_4"/>
    <property type="match status" value="1"/>
</dbReference>
<dbReference type="PROSITE" id="PS50221">
    <property type="entry name" value="GAIN_B"/>
    <property type="match status" value="1"/>
</dbReference>
<organism>
    <name type="scientific">Rattus norvegicus</name>
    <name type="common">Rat</name>
    <dbReference type="NCBI Taxonomy" id="10116"/>
    <lineage>
        <taxon>Eukaryota</taxon>
        <taxon>Metazoa</taxon>
        <taxon>Chordata</taxon>
        <taxon>Craniata</taxon>
        <taxon>Vertebrata</taxon>
        <taxon>Euteleostomi</taxon>
        <taxon>Mammalia</taxon>
        <taxon>Eutheria</taxon>
        <taxon>Euarchontoglires</taxon>
        <taxon>Glires</taxon>
        <taxon>Rodentia</taxon>
        <taxon>Myomorpha</taxon>
        <taxon>Muroidea</taxon>
        <taxon>Muridae</taxon>
        <taxon>Murinae</taxon>
        <taxon>Rattus</taxon>
    </lineage>
</organism>
<name>AGRG2_RAT</name>
<sequence length="1013" mass="110701">MLFSGGQYSPVGRPEEVLLIYKIFLVIICFHAILVTSLKENAGNSSLLSPSAESSLVSLVPYSNGTPDAASEVLSTLNRTEKSKITILKTFNASGVKSQRNICNLSSICSDSVFFRGEIVFQHDDHYNVTQNQDIVNSTFAGVLSLSELKRTELNKTLQTLSETYFIVCATAEAQNTLNCTFTVKLNETMNVCAMMVTFKSVQIRPMEQCCCSPRTPCPSSPEELEKLQCDLQDPIVCLADQPHGPPVSSSSKPVPVVPQATIFSHVASDFSLAEPLDHALMTSSTPSLAQETRLPSPQPTISLTSSPAIDLPVQHVVASSSLPQTDLSHTLSPVQSSIPSPTTAAPSVPEKVVAISTPPGETVVNTSSVPDLEAQVSQMEKALSLGSLEPNLAGEMVNRVSKLLHSPLALLAPLAQRLLKVVDAIGLQLNFSSTTISLTSPSLALAVIRVNASNFNTTTFAAQDPANLQVSLEAQAPKNSIGAITLPSSLMSNLPASEVELASRVQFNFFETPALFQDPSLENLSLISYVISSSVTNMTIKNLTRNVTVALKHINPSQDDLTVKCVFWDLNRNGGRGGWSSDGCSVKEKRMNETICTCSHLTSFGILLDLSRTSLPPSQMMALTFITYIGCGLSSIFLSVTLVTYIAFEKIRRDYPSKILIQLCAALLLLNLVFLLDSWIALYNARGFCISVAVFLHYFLLVSFTWMGLEAFHMYLALVKVFNTYIRKYILKFCIVGWGIPAVVVSIVLTISPDNYGIGSYGKFPNGTPDDFCWINSSVVFYITVVGYFCVIFLLNVSMFIVVLVQLCRIKKKKQLGAQRKTSIQDLRSIAGLTFLLGITWGFAFFAWGPVNLTFMYLFAIFNTLQGFFIFIFYCAAKENVRKQWRRYLCCGKLRLAENSDWSKTATNGLKKQTVNQGVSSSSNSLQSSCNSTNSTTLLVNSDCSVHASGNGNASTERNGVSFSVQNGDVCLHDLTGKQHMFSDKEDSCNGKSRMALRRTSKRGSLHFIEQM</sequence>
<keyword id="KW-0025">Alternative splicing</keyword>
<keyword id="KW-1003">Cell membrane</keyword>
<keyword id="KW-1015">Disulfide bond</keyword>
<keyword id="KW-0297">G-protein coupled receptor</keyword>
<keyword id="KW-0325">Glycoprotein</keyword>
<keyword id="KW-0472">Membrane</keyword>
<keyword id="KW-0597">Phosphoprotein</keyword>
<keyword id="KW-0675">Receptor</keyword>
<keyword id="KW-1185">Reference proteome</keyword>
<keyword id="KW-0732">Signal</keyword>
<keyword id="KW-0807">Transducer</keyword>
<keyword id="KW-0812">Transmembrane</keyword>
<keyword id="KW-1133">Transmembrane helix</keyword>
<evidence type="ECO:0000250" key="1">
    <source>
        <dbReference type="UniProtKB" id="Q8CJ12"/>
    </source>
</evidence>
<evidence type="ECO:0000250" key="2">
    <source>
        <dbReference type="UniProtKB" id="Q8IZP9"/>
    </source>
</evidence>
<evidence type="ECO:0000255" key="3"/>
<evidence type="ECO:0000255" key="4">
    <source>
        <dbReference type="PROSITE-ProRule" id="PRU00098"/>
    </source>
</evidence>
<evidence type="ECO:0000269" key="5">
    <source>
    </source>
</evidence>
<evidence type="ECO:0000303" key="6">
    <source>
    </source>
</evidence>
<evidence type="ECO:0000305" key="7"/>
<evidence type="ECO:0000312" key="8">
    <source>
        <dbReference type="RGD" id="628618"/>
    </source>
</evidence>
<feature type="signal peptide" evidence="3">
    <location>
        <begin position="1"/>
        <end position="37"/>
    </location>
</feature>
<feature type="chain" id="PRO_0000012888" description="Adhesion G-protein coupled receptor G2">
    <location>
        <begin position="38"/>
        <end position="1013"/>
    </location>
</feature>
<feature type="chain" id="PRO_0000462377" description="Adhesion G-protein coupled receptor G2, N-terminal fragment" evidence="7">
    <location>
        <begin position="38"/>
        <end position="602"/>
    </location>
</feature>
<feature type="chain" id="PRO_0000462378" description="Adhesion G-protein coupled receptor G2, C-terminal fragment" evidence="7">
    <location>
        <begin position="603"/>
        <end position="1013"/>
    </location>
</feature>
<feature type="topological domain" description="Extracellular" evidence="7">
    <location>
        <begin position="38"/>
        <end position="623"/>
    </location>
</feature>
<feature type="transmembrane region" description="Helical; Name=1" evidence="3">
    <location>
        <begin position="624"/>
        <end position="644"/>
    </location>
</feature>
<feature type="topological domain" description="Cytoplasmic" evidence="7">
    <location>
        <begin position="645"/>
        <end position="663"/>
    </location>
</feature>
<feature type="transmembrane region" description="Helical; Name=2" evidence="3">
    <location>
        <begin position="664"/>
        <end position="684"/>
    </location>
</feature>
<feature type="topological domain" description="Extracellular" evidence="7">
    <location>
        <begin position="685"/>
        <end position="688"/>
    </location>
</feature>
<feature type="transmembrane region" description="Helical; Name=3" evidence="3">
    <location>
        <begin position="689"/>
        <end position="709"/>
    </location>
</feature>
<feature type="topological domain" description="Cytoplasmic" evidence="7">
    <location>
        <begin position="710"/>
        <end position="733"/>
    </location>
</feature>
<feature type="transmembrane region" description="Helical; Name=4" evidence="3">
    <location>
        <begin position="734"/>
        <end position="754"/>
    </location>
</feature>
<feature type="topological domain" description="Extracellular" evidence="7">
    <location>
        <begin position="755"/>
        <end position="785"/>
    </location>
</feature>
<feature type="transmembrane region" description="Helical; Name=5" evidence="3">
    <location>
        <begin position="786"/>
        <end position="806"/>
    </location>
</feature>
<feature type="topological domain" description="Cytoplasmic" evidence="7">
    <location>
        <begin position="807"/>
        <end position="830"/>
    </location>
</feature>
<feature type="transmembrane region" description="Helical; Name=6" evidence="3">
    <location>
        <begin position="831"/>
        <end position="851"/>
    </location>
</feature>
<feature type="topological domain" description="Extracellular" evidence="7">
    <location>
        <begin position="852"/>
        <end position="853"/>
    </location>
</feature>
<feature type="transmembrane region" description="Helical; Name=7" evidence="3">
    <location>
        <begin position="854"/>
        <end position="874"/>
    </location>
</feature>
<feature type="topological domain" description="Cytoplasmic" evidence="7">
    <location>
        <begin position="875"/>
        <end position="1013"/>
    </location>
</feature>
<feature type="domain" description="GAIN-B" evidence="4">
    <location>
        <begin position="457"/>
        <end position="615"/>
    </location>
</feature>
<feature type="region of interest" description="GPS" evidence="4">
    <location>
        <begin position="566"/>
        <end position="615"/>
    </location>
</feature>
<feature type="region of interest" description="Stachel" evidence="1">
    <location>
        <begin position="604"/>
        <end position="615"/>
    </location>
</feature>
<feature type="binding site" evidence="1">
    <location>
        <position position="864"/>
    </location>
    <ligand>
        <name>3beta-hydroxyandrost-5-en-17-one</name>
        <dbReference type="ChEBI" id="CHEBI:28689"/>
    </ligand>
</feature>
<feature type="site" description="Cleavage; by autolysis" evidence="4">
    <location>
        <begin position="602"/>
        <end position="603"/>
    </location>
</feature>
<feature type="modified residue" description="Phosphoserine" evidence="2">
    <location>
        <position position="1006"/>
    </location>
</feature>
<feature type="glycosylation site" description="N-linked (GlcNAc...) asparagine" evidence="3">
    <location>
        <position position="44"/>
    </location>
</feature>
<feature type="glycosylation site" description="N-linked (GlcNAc...) asparagine" evidence="3">
    <location>
        <position position="78"/>
    </location>
</feature>
<feature type="glycosylation site" description="N-linked (GlcNAc...) asparagine" evidence="3">
    <location>
        <position position="92"/>
    </location>
</feature>
<feature type="glycosylation site" description="N-linked (GlcNAc...) asparagine" evidence="3">
    <location>
        <position position="104"/>
    </location>
</feature>
<feature type="glycosylation site" description="N-linked (GlcNAc...) asparagine" evidence="3">
    <location>
        <position position="128"/>
    </location>
</feature>
<feature type="glycosylation site" description="N-linked (GlcNAc...) asparagine" evidence="3">
    <location>
        <position position="137"/>
    </location>
</feature>
<feature type="glycosylation site" description="N-linked (GlcNAc...) asparagine" evidence="3">
    <location>
        <position position="155"/>
    </location>
</feature>
<feature type="glycosylation site" description="N-linked (GlcNAc...) asparagine" evidence="3">
    <location>
        <position position="179"/>
    </location>
</feature>
<feature type="glycosylation site" description="N-linked (GlcNAc...) asparagine" evidence="3">
    <location>
        <position position="187"/>
    </location>
</feature>
<feature type="glycosylation site" description="N-linked (GlcNAc...) asparagine" evidence="3">
    <location>
        <position position="366"/>
    </location>
</feature>
<feature type="glycosylation site" description="N-linked (GlcNAc...) asparagine" evidence="3">
    <location>
        <position position="431"/>
    </location>
</feature>
<feature type="glycosylation site" description="N-linked (GlcNAc...) asparagine" evidence="3">
    <location>
        <position position="452"/>
    </location>
</feature>
<feature type="glycosylation site" description="N-linked (GlcNAc...) asparagine" evidence="3">
    <location>
        <position position="457"/>
    </location>
</feature>
<feature type="glycosylation site" description="N-linked (GlcNAc...) asparagine" evidence="3">
    <location>
        <position position="524"/>
    </location>
</feature>
<feature type="glycosylation site" description="N-linked (GlcNAc...) asparagine" evidence="3">
    <location>
        <position position="538"/>
    </location>
</feature>
<feature type="glycosylation site" description="N-linked (GlcNAc...) asparagine" evidence="3">
    <location>
        <position position="543"/>
    </location>
</feature>
<feature type="glycosylation site" description="N-linked (GlcNAc...) asparagine" evidence="3">
    <location>
        <position position="547"/>
    </location>
</feature>
<feature type="glycosylation site" description="N-linked (GlcNAc...) asparagine" evidence="3">
    <location>
        <position position="593"/>
    </location>
</feature>
<feature type="glycosylation site" description="N-linked (GlcNAc...) asparagine" evidence="3">
    <location>
        <position position="777"/>
    </location>
</feature>
<feature type="glycosylation site" description="N-linked (GlcNAc...) asparagine" evidence="3">
    <location>
        <position position="853"/>
    </location>
</feature>
<feature type="disulfide bond" evidence="4">
    <location>
        <begin position="566"/>
        <end position="597"/>
    </location>
</feature>
<feature type="disulfide bond" evidence="4">
    <location>
        <begin position="585"/>
        <end position="599"/>
    </location>
</feature>
<feature type="disulfide bond" evidence="1">
    <location>
        <begin position="690"/>
        <end position="774"/>
    </location>
</feature>
<feature type="splice variant" id="VSP_009810" description="In isoform 2." evidence="6">
    <location>
        <begin position="40"/>
        <end position="67"/>
    </location>
</feature>
<feature type="splice variant" id="VSP_009811" description="In isoform 3." evidence="6">
    <location>
        <begin position="52"/>
        <end position="67"/>
    </location>
</feature>